<keyword id="KW-0007">Acetylation</keyword>
<keyword id="KW-0067">ATP-binding</keyword>
<keyword id="KW-0436">Ligase</keyword>
<keyword id="KW-0460">Magnesium</keyword>
<keyword id="KW-0479">Metal-binding</keyword>
<keyword id="KW-0547">Nucleotide-binding</keyword>
<comment type="function">
    <text evidence="1">Catalyzes the conversion of acetate into acetyl-CoA (AcCoA), an essential intermediate at the junction of anabolic and catabolic pathways. AcsA undergoes a two-step reaction. In the first half reaction, AcsA combines acetate with ATP to form acetyl-adenylate (AcAMP) intermediate. In the second half reaction, it can then transfer the acetyl group from AcAMP to the sulfhydryl group of CoA, forming the product AcCoA.</text>
</comment>
<comment type="catalytic activity">
    <reaction evidence="1">
        <text>acetate + ATP + CoA = acetyl-CoA + AMP + diphosphate</text>
        <dbReference type="Rhea" id="RHEA:23176"/>
        <dbReference type="ChEBI" id="CHEBI:30089"/>
        <dbReference type="ChEBI" id="CHEBI:30616"/>
        <dbReference type="ChEBI" id="CHEBI:33019"/>
        <dbReference type="ChEBI" id="CHEBI:57287"/>
        <dbReference type="ChEBI" id="CHEBI:57288"/>
        <dbReference type="ChEBI" id="CHEBI:456215"/>
        <dbReference type="EC" id="6.2.1.1"/>
    </reaction>
</comment>
<comment type="cofactor">
    <cofactor evidence="1">
        <name>Mg(2+)</name>
        <dbReference type="ChEBI" id="CHEBI:18420"/>
    </cofactor>
</comment>
<comment type="PTM">
    <text evidence="1">Acetylated. Deacetylation by the SIR2-homolog deacetylase activates the enzyme.</text>
</comment>
<comment type="similarity">
    <text evidence="1">Belongs to the ATP-dependent AMP-binding enzyme family.</text>
</comment>
<reference key="1">
    <citation type="journal article" date="2005" name="Genome Res.">
        <title>Comparative and functional genomic analyses of the pathogenicity of phytopathogen Xanthomonas campestris pv. campestris.</title>
        <authorList>
            <person name="Qian W."/>
            <person name="Jia Y."/>
            <person name="Ren S.-X."/>
            <person name="He Y.-Q."/>
            <person name="Feng J.-X."/>
            <person name="Lu L.-F."/>
            <person name="Sun Q."/>
            <person name="Ying G."/>
            <person name="Tang D.-J."/>
            <person name="Tang H."/>
            <person name="Wu W."/>
            <person name="Hao P."/>
            <person name="Wang L."/>
            <person name="Jiang B.-L."/>
            <person name="Zeng S."/>
            <person name="Gu W.-Y."/>
            <person name="Lu G."/>
            <person name="Rong L."/>
            <person name="Tian Y."/>
            <person name="Yao Z."/>
            <person name="Fu G."/>
            <person name="Chen B."/>
            <person name="Fang R."/>
            <person name="Qiang B."/>
            <person name="Chen Z."/>
            <person name="Zhao G.-P."/>
            <person name="Tang J.-L."/>
            <person name="He C."/>
        </authorList>
    </citation>
    <scope>NUCLEOTIDE SEQUENCE [LARGE SCALE GENOMIC DNA]</scope>
    <source>
        <strain>8004</strain>
    </source>
</reference>
<feature type="chain" id="PRO_1000085007" description="Acetyl-coenzyme A synthetase">
    <location>
        <begin position="1"/>
        <end position="647"/>
    </location>
</feature>
<feature type="binding site" evidence="1">
    <location>
        <begin position="190"/>
        <end position="193"/>
    </location>
    <ligand>
        <name>CoA</name>
        <dbReference type="ChEBI" id="CHEBI:57287"/>
    </ligand>
</feature>
<feature type="binding site" evidence="1">
    <location>
        <position position="310"/>
    </location>
    <ligand>
        <name>CoA</name>
        <dbReference type="ChEBI" id="CHEBI:57287"/>
    </ligand>
</feature>
<feature type="binding site" evidence="1">
    <location>
        <position position="334"/>
    </location>
    <ligand>
        <name>CoA</name>
        <dbReference type="ChEBI" id="CHEBI:57287"/>
    </ligand>
</feature>
<feature type="binding site" evidence="1">
    <location>
        <begin position="386"/>
        <end position="388"/>
    </location>
    <ligand>
        <name>ATP</name>
        <dbReference type="ChEBI" id="CHEBI:30616"/>
    </ligand>
</feature>
<feature type="binding site" evidence="1">
    <location>
        <begin position="410"/>
        <end position="415"/>
    </location>
    <ligand>
        <name>ATP</name>
        <dbReference type="ChEBI" id="CHEBI:30616"/>
    </ligand>
</feature>
<feature type="binding site" evidence="1">
    <location>
        <position position="499"/>
    </location>
    <ligand>
        <name>ATP</name>
        <dbReference type="ChEBI" id="CHEBI:30616"/>
    </ligand>
</feature>
<feature type="binding site" evidence="1">
    <location>
        <position position="514"/>
    </location>
    <ligand>
        <name>ATP</name>
        <dbReference type="ChEBI" id="CHEBI:30616"/>
    </ligand>
</feature>
<feature type="binding site" evidence="1">
    <location>
        <position position="522"/>
    </location>
    <ligand>
        <name>CoA</name>
        <dbReference type="ChEBI" id="CHEBI:57287"/>
    </ligand>
</feature>
<feature type="binding site" evidence="1">
    <location>
        <position position="525"/>
    </location>
    <ligand>
        <name>ATP</name>
        <dbReference type="ChEBI" id="CHEBI:30616"/>
    </ligand>
</feature>
<feature type="binding site" evidence="1">
    <location>
        <position position="536"/>
    </location>
    <ligand>
        <name>Mg(2+)</name>
        <dbReference type="ChEBI" id="CHEBI:18420"/>
    </ligand>
</feature>
<feature type="binding site" evidence="1">
    <location>
        <position position="538"/>
    </location>
    <ligand>
        <name>Mg(2+)</name>
        <dbReference type="ChEBI" id="CHEBI:18420"/>
    </ligand>
</feature>
<feature type="binding site" evidence="1">
    <location>
        <position position="541"/>
    </location>
    <ligand>
        <name>Mg(2+)</name>
        <dbReference type="ChEBI" id="CHEBI:18420"/>
    </ligand>
</feature>
<feature type="binding site" evidence="1">
    <location>
        <position position="583"/>
    </location>
    <ligand>
        <name>CoA</name>
        <dbReference type="ChEBI" id="CHEBI:57287"/>
    </ligand>
</feature>
<feature type="modified residue" description="N6-acetyllysine" evidence="1">
    <location>
        <position position="608"/>
    </location>
</feature>
<proteinExistence type="inferred from homology"/>
<dbReference type="EC" id="6.2.1.1" evidence="1"/>
<dbReference type="EMBL" id="CP000050">
    <property type="protein sequence ID" value="AAY51188.1"/>
    <property type="molecule type" value="Genomic_DNA"/>
</dbReference>
<dbReference type="SMR" id="Q4UP35"/>
<dbReference type="KEGG" id="xcb:XC_4149"/>
<dbReference type="HOGENOM" id="CLU_000022_3_6_6"/>
<dbReference type="Proteomes" id="UP000000420">
    <property type="component" value="Chromosome"/>
</dbReference>
<dbReference type="GO" id="GO:0005829">
    <property type="term" value="C:cytosol"/>
    <property type="evidence" value="ECO:0007669"/>
    <property type="project" value="TreeGrafter"/>
</dbReference>
<dbReference type="GO" id="GO:0003987">
    <property type="term" value="F:acetate-CoA ligase activity"/>
    <property type="evidence" value="ECO:0007669"/>
    <property type="project" value="UniProtKB-UniRule"/>
</dbReference>
<dbReference type="GO" id="GO:0016208">
    <property type="term" value="F:AMP binding"/>
    <property type="evidence" value="ECO:0007669"/>
    <property type="project" value="InterPro"/>
</dbReference>
<dbReference type="GO" id="GO:0005524">
    <property type="term" value="F:ATP binding"/>
    <property type="evidence" value="ECO:0007669"/>
    <property type="project" value="UniProtKB-KW"/>
</dbReference>
<dbReference type="GO" id="GO:0046872">
    <property type="term" value="F:metal ion binding"/>
    <property type="evidence" value="ECO:0007669"/>
    <property type="project" value="UniProtKB-KW"/>
</dbReference>
<dbReference type="GO" id="GO:0019427">
    <property type="term" value="P:acetyl-CoA biosynthetic process from acetate"/>
    <property type="evidence" value="ECO:0007669"/>
    <property type="project" value="InterPro"/>
</dbReference>
<dbReference type="CDD" id="cd05966">
    <property type="entry name" value="ACS"/>
    <property type="match status" value="1"/>
</dbReference>
<dbReference type="FunFam" id="3.30.300.30:FF:000004">
    <property type="entry name" value="Acetyl-coenzyme A synthetase"/>
    <property type="match status" value="1"/>
</dbReference>
<dbReference type="FunFam" id="3.40.50.12780:FF:000001">
    <property type="entry name" value="Acetyl-coenzyme A synthetase"/>
    <property type="match status" value="1"/>
</dbReference>
<dbReference type="Gene3D" id="3.30.300.30">
    <property type="match status" value="1"/>
</dbReference>
<dbReference type="Gene3D" id="3.40.50.12780">
    <property type="entry name" value="N-terminal domain of ligase-like"/>
    <property type="match status" value="1"/>
</dbReference>
<dbReference type="HAMAP" id="MF_01123">
    <property type="entry name" value="Ac_CoA_synth"/>
    <property type="match status" value="1"/>
</dbReference>
<dbReference type="InterPro" id="IPR011904">
    <property type="entry name" value="Ac_CoA_lig"/>
</dbReference>
<dbReference type="InterPro" id="IPR032387">
    <property type="entry name" value="ACAS_N"/>
</dbReference>
<dbReference type="InterPro" id="IPR025110">
    <property type="entry name" value="AMP-bd_C"/>
</dbReference>
<dbReference type="InterPro" id="IPR045851">
    <property type="entry name" value="AMP-bd_C_sf"/>
</dbReference>
<dbReference type="InterPro" id="IPR020845">
    <property type="entry name" value="AMP-binding_CS"/>
</dbReference>
<dbReference type="InterPro" id="IPR000873">
    <property type="entry name" value="AMP-dep_synth/lig_dom"/>
</dbReference>
<dbReference type="InterPro" id="IPR042099">
    <property type="entry name" value="ANL_N_sf"/>
</dbReference>
<dbReference type="NCBIfam" id="TIGR02188">
    <property type="entry name" value="Ac_CoA_lig_AcsA"/>
    <property type="match status" value="1"/>
</dbReference>
<dbReference type="NCBIfam" id="NF001208">
    <property type="entry name" value="PRK00174.1"/>
    <property type="match status" value="1"/>
</dbReference>
<dbReference type="PANTHER" id="PTHR24095">
    <property type="entry name" value="ACETYL-COENZYME A SYNTHETASE"/>
    <property type="match status" value="1"/>
</dbReference>
<dbReference type="PANTHER" id="PTHR24095:SF14">
    <property type="entry name" value="ACETYL-COENZYME A SYNTHETASE 1"/>
    <property type="match status" value="1"/>
</dbReference>
<dbReference type="Pfam" id="PF16177">
    <property type="entry name" value="ACAS_N"/>
    <property type="match status" value="1"/>
</dbReference>
<dbReference type="Pfam" id="PF00501">
    <property type="entry name" value="AMP-binding"/>
    <property type="match status" value="1"/>
</dbReference>
<dbReference type="Pfam" id="PF13193">
    <property type="entry name" value="AMP-binding_C"/>
    <property type="match status" value="1"/>
</dbReference>
<dbReference type="SUPFAM" id="SSF56801">
    <property type="entry name" value="Acetyl-CoA synthetase-like"/>
    <property type="match status" value="1"/>
</dbReference>
<dbReference type="PROSITE" id="PS00455">
    <property type="entry name" value="AMP_BINDING"/>
    <property type="match status" value="1"/>
</dbReference>
<name>ACSA_XANC8</name>
<protein>
    <recommendedName>
        <fullName evidence="1">Acetyl-coenzyme A synthetase</fullName>
        <shortName evidence="1">AcCoA synthetase</shortName>
        <shortName evidence="1">Acs</shortName>
        <ecNumber evidence="1">6.2.1.1</ecNumber>
    </recommendedName>
    <alternativeName>
        <fullName evidence="1">Acetate--CoA ligase</fullName>
    </alternativeName>
    <alternativeName>
        <fullName evidence="1">Acyl-activating enzyme</fullName>
    </alternativeName>
</protein>
<sequence length="647" mass="71410">MADVYPVDPAFAADARITREQYATLYRESIEHPEQFWGKAAQRLDWFKQPTQIKDVSFALDDFHVRWFGDGELNASVNCLDRQLATRGDKTALLFEPDSPDSPSYPVTYRELYERVCKLGNALRNLGVKKGDRVTIYLPMIVDAAVAMLACARIGAVHSVVFGGFAANSIADRVIDCQSKLIITADEGLRGGKKIPLKANVDAALKIPGTNTVETVLVVRHTGGAVDMQAPRDRWFHDVVDGQPAECEPERMNAEDPLFILYTSGSTGKPKGVLHTTAGYLLFASYTHEVVFDLREDDIYWCTADVGWVTGHSYIVYGPLANGATAVMFEGVPNYPNVSRFWEVIDKHQVTIFYTAPTAIRALMREGEAPVKKTSRSSLRLLGSVGEPINPEAWRWYYEVVGDSRCPIVDTWWQTETGGILISPLAGAVDLKPGSATLPFFGVQPALVDAEGKILEGATEGNLVLLDSWPGQMRTVYGDHQRFIDTYFRTYPGSYFTGDGCRRDADGYYWITGRVDDVINVSGHRIGTAEVESALVSHPKVAEAAVVGFPHDVKGQGIYAYVTLIAGETPSEELHKELVSWVRKEIGPIASPDHLQWAPGLPKTRSGKIMRRILRKIAENAPDQLGDTSTLADPSVVDSLVNERLTR</sequence>
<accession>Q4UP35</accession>
<evidence type="ECO:0000255" key="1">
    <source>
        <dbReference type="HAMAP-Rule" id="MF_01123"/>
    </source>
</evidence>
<organism>
    <name type="scientific">Xanthomonas campestris pv. campestris (strain 8004)</name>
    <dbReference type="NCBI Taxonomy" id="314565"/>
    <lineage>
        <taxon>Bacteria</taxon>
        <taxon>Pseudomonadati</taxon>
        <taxon>Pseudomonadota</taxon>
        <taxon>Gammaproteobacteria</taxon>
        <taxon>Lysobacterales</taxon>
        <taxon>Lysobacteraceae</taxon>
        <taxon>Xanthomonas</taxon>
    </lineage>
</organism>
<gene>
    <name evidence="1" type="primary">acsA</name>
    <name type="ordered locus">XC_4149</name>
</gene>